<reference key="1">
    <citation type="journal article" date="1996" name="DNA Res.">
        <title>A 460-kb DNA sequence of the Escherichia coli K-12 genome corresponding to the 40.1-50.0 min region on the linkage map.</title>
        <authorList>
            <person name="Itoh T."/>
            <person name="Aiba H."/>
            <person name="Baba T."/>
            <person name="Fujita K."/>
            <person name="Hayashi K."/>
            <person name="Inada T."/>
            <person name="Isono K."/>
            <person name="Kasai H."/>
            <person name="Kimura S."/>
            <person name="Kitakawa M."/>
            <person name="Kitagawa M."/>
            <person name="Makino K."/>
            <person name="Miki T."/>
            <person name="Mizobuchi K."/>
            <person name="Mori H."/>
            <person name="Mori T."/>
            <person name="Motomura K."/>
            <person name="Nakade S."/>
            <person name="Nakamura Y."/>
            <person name="Nashimoto H."/>
            <person name="Nishio Y."/>
            <person name="Oshima T."/>
            <person name="Saito N."/>
            <person name="Sampei G."/>
            <person name="Seki Y."/>
            <person name="Sivasundaram S."/>
            <person name="Tagami H."/>
            <person name="Takeda J."/>
            <person name="Takemoto K."/>
            <person name="Wada C."/>
            <person name="Yamamoto Y."/>
            <person name="Horiuchi T."/>
        </authorList>
    </citation>
    <scope>NUCLEOTIDE SEQUENCE [LARGE SCALE GENOMIC DNA]</scope>
    <source>
        <strain>K12 / W3110 / ATCC 27325 / DSM 5911</strain>
    </source>
</reference>
<reference key="2">
    <citation type="journal article" date="1997" name="Science">
        <title>The complete genome sequence of Escherichia coli K-12.</title>
        <authorList>
            <person name="Blattner F.R."/>
            <person name="Plunkett G. III"/>
            <person name="Bloch C.A."/>
            <person name="Perna N.T."/>
            <person name="Burland V."/>
            <person name="Riley M."/>
            <person name="Collado-Vides J."/>
            <person name="Glasner J.D."/>
            <person name="Rode C.K."/>
            <person name="Mayhew G.F."/>
            <person name="Gregor J."/>
            <person name="Davis N.W."/>
            <person name="Kirkpatrick H.A."/>
            <person name="Goeden M.A."/>
            <person name="Rose D.J."/>
            <person name="Mau B."/>
            <person name="Shao Y."/>
        </authorList>
    </citation>
    <scope>NUCLEOTIDE SEQUENCE [LARGE SCALE GENOMIC DNA]</scope>
    <source>
        <strain>K12 / MG1655 / ATCC 47076</strain>
    </source>
</reference>
<reference key="3">
    <citation type="journal article" date="2006" name="Mol. Syst. Biol.">
        <title>Highly accurate genome sequences of Escherichia coli K-12 strains MG1655 and W3110.</title>
        <authorList>
            <person name="Hayashi K."/>
            <person name="Morooka N."/>
            <person name="Yamamoto Y."/>
            <person name="Fujita K."/>
            <person name="Isono K."/>
            <person name="Choi S."/>
            <person name="Ohtsubo E."/>
            <person name="Baba T."/>
            <person name="Wanner B.L."/>
            <person name="Mori H."/>
            <person name="Horiuchi T."/>
        </authorList>
    </citation>
    <scope>NUCLEOTIDE SEQUENCE [LARGE SCALE GENOMIC DNA]</scope>
    <source>
        <strain>K12 / W3110 / ATCC 27325 / DSM 5911</strain>
    </source>
</reference>
<reference key="4">
    <citation type="journal article" date="1984" name="J. Biol. Chem.">
        <title>Structure and expression of the alkA gene of Escherichia coli involved in adaptive response to alkylating agents.</title>
        <authorList>
            <person name="Nakabeppu Y."/>
            <person name="Miyata T."/>
            <person name="Kondo H."/>
            <person name="Iwanaga S."/>
            <person name="Sekiguchi M."/>
        </authorList>
    </citation>
    <scope>NUCLEOTIDE SEQUENCE [GENOMIC DNA] OF 965-1105</scope>
</reference>
<reference key="5">
    <citation type="journal article" date="1994" name="Nucleic Acids Res.">
        <title>Intrinsic and extrinsic approaches for detecting genes in a bacterial genome.</title>
        <authorList>
            <person name="Borodovsky M."/>
            <person name="Rudd K.E."/>
            <person name="Koonin E.V."/>
        </authorList>
    </citation>
    <scope>IDENTIFICATION</scope>
</reference>
<reference key="6">
    <citation type="journal article" date="2008" name="Genes Dev.">
        <title>Inverse regulatory coordination of motility and curli-mediated adhesion in Escherichia coli.</title>
        <authorList>
            <person name="Pesavento C."/>
            <person name="Becker G."/>
            <person name="Sommerfeldt N."/>
            <person name="Possling A."/>
            <person name="Tschowri N."/>
            <person name="Mehlis A."/>
            <person name="Hengge R."/>
        </authorList>
    </citation>
    <scope>DISRUPTION PHENOTYPE</scope>
    <source>
        <strain>K12 / W3110 / ATCC 27325 / DSM 5911</strain>
    </source>
</reference>
<reference key="7">
    <citation type="journal article" date="2009" name="Microbiology">
        <title>Gene expression patterns and differential input into curli fimbriae regulation of all GGDEF/EAL domain proteins in Escherichia coli.</title>
        <authorList>
            <person name="Sommerfeldt N."/>
            <person name="Possling A."/>
            <person name="Becker G."/>
            <person name="Pesavento C."/>
            <person name="Tschowri N."/>
            <person name="Hengge R."/>
        </authorList>
    </citation>
    <scope>INDUCTION</scope>
    <scope>RPOS-DEPENDENCE</scope>
    <scope>DISRUPTION PHENOTYPE</scope>
    <source>
        <strain>K12 / W3110 / ATCC 27325 / DSM 5911</strain>
    </source>
</reference>
<reference key="8">
    <citation type="journal article" date="2010" name="Cell">
        <title>Second messenger-mediated adjustment of bacterial swimming velocity.</title>
        <authorList>
            <person name="Boehm A."/>
            <person name="Kaiser M."/>
            <person name="Li H."/>
            <person name="Spangler C."/>
            <person name="Kasper C.A."/>
            <person name="Ackermann M."/>
            <person name="Kaever V."/>
            <person name="Sourjik V."/>
            <person name="Roth V."/>
            <person name="Jenal U."/>
        </authorList>
    </citation>
    <scope>ROLE IN MOTILITY</scope>
    <scope>DISRUPTION PHENOTYPE</scope>
    <source>
        <strain>K12 / MG1655 / ATCC 47076</strain>
    </source>
</reference>
<reference key="9">
    <citation type="journal article" date="2013" name="EMBO J.">
        <title>The EAL domain protein YciR acts as a trigger enzyme in a c-di-GMP signalling cascade in E. coli biofilm control.</title>
        <authorList>
            <person name="Lindenberg S."/>
            <person name="Klauck G."/>
            <person name="Pesavento C."/>
            <person name="Klauck E."/>
            <person name="Hengge R."/>
        </authorList>
    </citation>
    <scope>FUNCTION</scope>
</reference>
<reference key="10">
    <citation type="journal article" date="2015" name="J. Bacteriol.">
        <title>Systematic nomenclature for GGDEF and EAL domain-containing cyclic di-GMP turnover proteins of Escherichia coli.</title>
        <authorList>
            <person name="Hengge R."/>
            <person name="Galperin M.Y."/>
            <person name="Ghigo J.M."/>
            <person name="Gomelsky M."/>
            <person name="Green J."/>
            <person name="Hughes K.T."/>
            <person name="Jenal U."/>
            <person name="Landini P."/>
        </authorList>
    </citation>
    <scope>NOMENCLATURE</scope>
</reference>
<organism>
    <name type="scientific">Escherichia coli (strain K12)</name>
    <dbReference type="NCBI Taxonomy" id="83333"/>
    <lineage>
        <taxon>Bacteria</taxon>
        <taxon>Pseudomonadati</taxon>
        <taxon>Pseudomonadota</taxon>
        <taxon>Gammaproteobacteria</taxon>
        <taxon>Enterobacterales</taxon>
        <taxon>Enterobacteriaceae</taxon>
        <taxon>Escherichia</taxon>
    </lineage>
</organism>
<feature type="chain" id="PRO_0000169122" description="Probable diguanylate cyclase DgcE">
    <location>
        <begin position="1"/>
        <end position="1105"/>
    </location>
</feature>
<feature type="transmembrane region" description="Helical" evidence="2">
    <location>
        <begin position="9"/>
        <end position="29"/>
    </location>
</feature>
<feature type="transmembrane region" description="Helical" evidence="2">
    <location>
        <begin position="38"/>
        <end position="58"/>
    </location>
</feature>
<feature type="transmembrane region" description="Helical" evidence="2">
    <location>
        <begin position="64"/>
        <end position="84"/>
    </location>
</feature>
<feature type="transmembrane region" description="Helical" evidence="2">
    <location>
        <begin position="88"/>
        <end position="108"/>
    </location>
</feature>
<feature type="transmembrane region" description="Helical" evidence="2">
    <location>
        <begin position="127"/>
        <end position="147"/>
    </location>
</feature>
<feature type="transmembrane region" description="Helical" evidence="2">
    <location>
        <begin position="156"/>
        <end position="176"/>
    </location>
</feature>
<feature type="transmembrane region" description="Helical" evidence="2">
    <location>
        <begin position="190"/>
        <end position="207"/>
    </location>
</feature>
<feature type="transmembrane region" description="Helical" evidence="2">
    <location>
        <begin position="211"/>
        <end position="228"/>
    </location>
</feature>
<feature type="transmembrane region" description="Helical" evidence="2">
    <location>
        <begin position="236"/>
        <end position="256"/>
    </location>
</feature>
<feature type="transmembrane region" description="Helical" evidence="2">
    <location>
        <begin position="270"/>
        <end position="290"/>
    </location>
</feature>
<feature type="domain" description="PAS 1" evidence="5">
    <location>
        <begin position="300"/>
        <end position="370"/>
    </location>
</feature>
<feature type="domain" description="PAC 1" evidence="6">
    <location>
        <begin position="374"/>
        <end position="426"/>
    </location>
</feature>
<feature type="domain" description="PAC 2" evidence="6">
    <location>
        <begin position="501"/>
        <end position="552"/>
    </location>
</feature>
<feature type="domain" description="PAS 2" evidence="5">
    <location>
        <begin position="553"/>
        <end position="623"/>
    </location>
</feature>
<feature type="domain" description="PAC 3" evidence="6">
    <location>
        <begin position="626"/>
        <end position="680"/>
    </location>
</feature>
<feature type="domain" description="GGDEF" evidence="4">
    <location>
        <begin position="712"/>
        <end position="845"/>
    </location>
</feature>
<feature type="domain" description="EAL" evidence="3">
    <location>
        <begin position="855"/>
        <end position="1104"/>
    </location>
</feature>
<feature type="active site" description="Proton acceptor" evidence="2">
    <location>
        <position position="763"/>
    </location>
</feature>
<feature type="binding site" evidence="1">
    <location>
        <position position="720"/>
    </location>
    <ligand>
        <name>Mg(2+)</name>
        <dbReference type="ChEBI" id="CHEBI:18420"/>
    </ligand>
</feature>
<feature type="binding site" evidence="1">
    <location>
        <position position="728"/>
    </location>
    <ligand>
        <name>substrate</name>
    </ligand>
</feature>
<feature type="binding site" evidence="1">
    <location>
        <position position="733"/>
    </location>
    <ligand>
        <name>substrate</name>
    </ligand>
</feature>
<feature type="binding site" evidence="1">
    <location>
        <position position="737"/>
    </location>
    <ligand>
        <name>substrate</name>
    </ligand>
</feature>
<feature type="binding site" evidence="1">
    <location>
        <position position="763"/>
    </location>
    <ligand>
        <name>Mg(2+)</name>
        <dbReference type="ChEBI" id="CHEBI:18420"/>
    </ligand>
</feature>
<feature type="binding site" evidence="1">
    <location>
        <position position="783"/>
    </location>
    <ligand>
        <name>substrate</name>
    </ligand>
</feature>
<feature type="site" description="Transition state stabilizer" evidence="2">
    <location>
        <position position="725"/>
    </location>
</feature>
<feature type="sequence conflict" description="In Ref. 4; K02498." evidence="12" ref="4">
    <original>EQ</original>
    <variation>NS</variation>
    <location>
        <begin position="965"/>
        <end position="966"/>
    </location>
</feature>
<dbReference type="EC" id="2.7.7.65" evidence="1"/>
<dbReference type="EMBL" id="U00096">
    <property type="protein sequence ID" value="AAC75128.1"/>
    <property type="molecule type" value="Genomic_DNA"/>
</dbReference>
<dbReference type="EMBL" id="AP009048">
    <property type="protein sequence ID" value="BAA15920.1"/>
    <property type="molecule type" value="Genomic_DNA"/>
</dbReference>
<dbReference type="EMBL" id="K02498">
    <property type="status" value="NOT_ANNOTATED_CDS"/>
    <property type="molecule type" value="Genomic_DNA"/>
</dbReference>
<dbReference type="PIR" id="B64973">
    <property type="entry name" value="B64973"/>
</dbReference>
<dbReference type="RefSeq" id="NP_416571.1">
    <property type="nucleotide sequence ID" value="NC_000913.3"/>
</dbReference>
<dbReference type="RefSeq" id="WP_000043761.1">
    <property type="nucleotide sequence ID" value="NZ_LN832404.1"/>
</dbReference>
<dbReference type="SMR" id="P38097"/>
<dbReference type="BioGRID" id="4259682">
    <property type="interactions" value="201"/>
</dbReference>
<dbReference type="FunCoup" id="P38097">
    <property type="interactions" value="7"/>
</dbReference>
<dbReference type="IntAct" id="P38097">
    <property type="interactions" value="1"/>
</dbReference>
<dbReference type="STRING" id="511145.b2067"/>
<dbReference type="jPOST" id="P38097"/>
<dbReference type="PaxDb" id="511145-b2067"/>
<dbReference type="EnsemblBacteria" id="AAC75128">
    <property type="protein sequence ID" value="AAC75128"/>
    <property type="gene ID" value="b2067"/>
</dbReference>
<dbReference type="GeneID" id="946600"/>
<dbReference type="KEGG" id="ecj:JW2052"/>
<dbReference type="KEGG" id="eco:b2067"/>
<dbReference type="KEGG" id="ecoc:C3026_11625"/>
<dbReference type="PATRIC" id="fig|1411691.4.peg.184"/>
<dbReference type="EchoBASE" id="EB2297"/>
<dbReference type="eggNOG" id="COG3447">
    <property type="taxonomic scope" value="Bacteria"/>
</dbReference>
<dbReference type="eggNOG" id="COG5001">
    <property type="taxonomic scope" value="Bacteria"/>
</dbReference>
<dbReference type="eggNOG" id="COG5002">
    <property type="taxonomic scope" value="Bacteria"/>
</dbReference>
<dbReference type="HOGENOM" id="CLU_000445_126_1_6"/>
<dbReference type="InParanoid" id="P38097"/>
<dbReference type="OMA" id="VMSKPSQ"/>
<dbReference type="OrthoDB" id="9787514at2"/>
<dbReference type="PhylomeDB" id="P38097"/>
<dbReference type="BioCyc" id="EcoCyc:EG12396-MONOMER"/>
<dbReference type="UniPathway" id="UPA00599"/>
<dbReference type="PRO" id="PR:P38097"/>
<dbReference type="Proteomes" id="UP000000625">
    <property type="component" value="Chromosome"/>
</dbReference>
<dbReference type="GO" id="GO:0005886">
    <property type="term" value="C:plasma membrane"/>
    <property type="evidence" value="ECO:0007669"/>
    <property type="project" value="UniProtKB-SubCell"/>
</dbReference>
<dbReference type="GO" id="GO:0052621">
    <property type="term" value="F:diguanylate cyclase activity"/>
    <property type="evidence" value="ECO:0000269"/>
    <property type="project" value="EcoCyc"/>
</dbReference>
<dbReference type="GO" id="GO:0005525">
    <property type="term" value="F:GTP binding"/>
    <property type="evidence" value="ECO:0007669"/>
    <property type="project" value="UniProtKB-KW"/>
</dbReference>
<dbReference type="GO" id="GO:0046872">
    <property type="term" value="F:metal ion binding"/>
    <property type="evidence" value="ECO:0007669"/>
    <property type="project" value="UniProtKB-KW"/>
</dbReference>
<dbReference type="GO" id="GO:1900231">
    <property type="term" value="P:regulation of single-species biofilm formation on inanimate substrate"/>
    <property type="evidence" value="ECO:0000315"/>
    <property type="project" value="EcoCyc"/>
</dbReference>
<dbReference type="CDD" id="cd01949">
    <property type="entry name" value="GGDEF"/>
    <property type="match status" value="1"/>
</dbReference>
<dbReference type="CDD" id="cd00130">
    <property type="entry name" value="PAS"/>
    <property type="match status" value="3"/>
</dbReference>
<dbReference type="FunFam" id="3.20.20.450:FF:000018">
    <property type="entry name" value="Probable diguanylate cyclase DgcE"/>
    <property type="match status" value="1"/>
</dbReference>
<dbReference type="FunFam" id="3.30.450.20:FF:000154">
    <property type="entry name" value="Probable diguanylate cyclase DgcE"/>
    <property type="match status" value="1"/>
</dbReference>
<dbReference type="FunFam" id="3.30.70.270:FF:000069">
    <property type="entry name" value="Probable diguanylate cyclase DgcE"/>
    <property type="match status" value="1"/>
</dbReference>
<dbReference type="FunFam" id="3.30.450.20:FF:000126">
    <property type="entry name" value="Putative diguanylate cyclase YegE"/>
    <property type="match status" value="1"/>
</dbReference>
<dbReference type="FunFam" id="2.10.70.100:FF:000001">
    <property type="entry name" value="Sensory transduction histidine kinase"/>
    <property type="match status" value="1"/>
</dbReference>
<dbReference type="Gene3D" id="2.10.70.100">
    <property type="match status" value="1"/>
</dbReference>
<dbReference type="Gene3D" id="3.30.70.270">
    <property type="match status" value="1"/>
</dbReference>
<dbReference type="Gene3D" id="3.20.20.450">
    <property type="entry name" value="EAL domain"/>
    <property type="match status" value="1"/>
</dbReference>
<dbReference type="Gene3D" id="3.30.450.20">
    <property type="entry name" value="PAS domain"/>
    <property type="match status" value="3"/>
</dbReference>
<dbReference type="InterPro" id="IPR052155">
    <property type="entry name" value="Biofilm_reg_signaling"/>
</dbReference>
<dbReference type="InterPro" id="IPR001633">
    <property type="entry name" value="EAL_dom"/>
</dbReference>
<dbReference type="InterPro" id="IPR035919">
    <property type="entry name" value="EAL_sf"/>
</dbReference>
<dbReference type="InterPro" id="IPR000160">
    <property type="entry name" value="GGDEF_dom"/>
</dbReference>
<dbReference type="InterPro" id="IPR007895">
    <property type="entry name" value="MASE1"/>
</dbReference>
<dbReference type="InterPro" id="IPR029787">
    <property type="entry name" value="Nucleotide_cyclase"/>
</dbReference>
<dbReference type="InterPro" id="IPR001610">
    <property type="entry name" value="PAC"/>
</dbReference>
<dbReference type="InterPro" id="IPR000014">
    <property type="entry name" value="PAS"/>
</dbReference>
<dbReference type="InterPro" id="IPR000700">
    <property type="entry name" value="PAS-assoc_C"/>
</dbReference>
<dbReference type="InterPro" id="IPR035965">
    <property type="entry name" value="PAS-like_dom_sf"/>
</dbReference>
<dbReference type="InterPro" id="IPR013656">
    <property type="entry name" value="PAS_4"/>
</dbReference>
<dbReference type="InterPro" id="IPR013655">
    <property type="entry name" value="PAS_fold_3"/>
</dbReference>
<dbReference type="InterPro" id="IPR043128">
    <property type="entry name" value="Rev_trsase/Diguanyl_cyclase"/>
</dbReference>
<dbReference type="NCBIfam" id="TIGR00254">
    <property type="entry name" value="GGDEF"/>
    <property type="match status" value="1"/>
</dbReference>
<dbReference type="NCBIfam" id="NF007298">
    <property type="entry name" value="PRK09776.1"/>
    <property type="match status" value="1"/>
</dbReference>
<dbReference type="NCBIfam" id="TIGR00229">
    <property type="entry name" value="sensory_box"/>
    <property type="match status" value="2"/>
</dbReference>
<dbReference type="PANTHER" id="PTHR44757:SF2">
    <property type="entry name" value="BIOFILM ARCHITECTURE MAINTENANCE PROTEIN MBAA"/>
    <property type="match status" value="1"/>
</dbReference>
<dbReference type="PANTHER" id="PTHR44757">
    <property type="entry name" value="DIGUANYLATE CYCLASE DGCP"/>
    <property type="match status" value="1"/>
</dbReference>
<dbReference type="Pfam" id="PF00563">
    <property type="entry name" value="EAL"/>
    <property type="match status" value="1"/>
</dbReference>
<dbReference type="Pfam" id="PF00990">
    <property type="entry name" value="GGDEF"/>
    <property type="match status" value="1"/>
</dbReference>
<dbReference type="Pfam" id="PF05231">
    <property type="entry name" value="MASE1"/>
    <property type="match status" value="1"/>
</dbReference>
<dbReference type="Pfam" id="PF08447">
    <property type="entry name" value="PAS_3"/>
    <property type="match status" value="1"/>
</dbReference>
<dbReference type="Pfam" id="PF08448">
    <property type="entry name" value="PAS_4"/>
    <property type="match status" value="1"/>
</dbReference>
<dbReference type="Pfam" id="PF13426">
    <property type="entry name" value="PAS_9"/>
    <property type="match status" value="1"/>
</dbReference>
<dbReference type="SMART" id="SM00052">
    <property type="entry name" value="EAL"/>
    <property type="match status" value="1"/>
</dbReference>
<dbReference type="SMART" id="SM00267">
    <property type="entry name" value="GGDEF"/>
    <property type="match status" value="1"/>
</dbReference>
<dbReference type="SMART" id="SM00086">
    <property type="entry name" value="PAC"/>
    <property type="match status" value="3"/>
</dbReference>
<dbReference type="SMART" id="SM00091">
    <property type="entry name" value="PAS"/>
    <property type="match status" value="3"/>
</dbReference>
<dbReference type="SUPFAM" id="SSF141868">
    <property type="entry name" value="EAL domain-like"/>
    <property type="match status" value="1"/>
</dbReference>
<dbReference type="SUPFAM" id="SSF55073">
    <property type="entry name" value="Nucleotide cyclase"/>
    <property type="match status" value="1"/>
</dbReference>
<dbReference type="SUPFAM" id="SSF55785">
    <property type="entry name" value="PYP-like sensor domain (PAS domain)"/>
    <property type="match status" value="3"/>
</dbReference>
<dbReference type="PROSITE" id="PS50883">
    <property type="entry name" value="EAL"/>
    <property type="match status" value="1"/>
</dbReference>
<dbReference type="PROSITE" id="PS50887">
    <property type="entry name" value="GGDEF"/>
    <property type="match status" value="1"/>
</dbReference>
<dbReference type="PROSITE" id="PS50113">
    <property type="entry name" value="PAC"/>
    <property type="match status" value="3"/>
</dbReference>
<dbReference type="PROSITE" id="PS50112">
    <property type="entry name" value="PAS"/>
    <property type="match status" value="2"/>
</dbReference>
<evidence type="ECO:0000250" key="1">
    <source>
        <dbReference type="UniProtKB" id="P31129"/>
    </source>
</evidence>
<evidence type="ECO:0000255" key="2"/>
<evidence type="ECO:0000255" key="3">
    <source>
        <dbReference type="PROSITE-ProRule" id="PRU00074"/>
    </source>
</evidence>
<evidence type="ECO:0000255" key="4">
    <source>
        <dbReference type="PROSITE-ProRule" id="PRU00095"/>
    </source>
</evidence>
<evidence type="ECO:0000255" key="5">
    <source>
        <dbReference type="PROSITE-ProRule" id="PRU00140"/>
    </source>
</evidence>
<evidence type="ECO:0000255" key="6">
    <source>
        <dbReference type="PROSITE-ProRule" id="PRU00141"/>
    </source>
</evidence>
<evidence type="ECO:0000269" key="7">
    <source>
    </source>
</evidence>
<evidence type="ECO:0000269" key="8">
    <source>
    </source>
</evidence>
<evidence type="ECO:0000269" key="9">
    <source>
    </source>
</evidence>
<evidence type="ECO:0000269" key="10">
    <source>
    </source>
</evidence>
<evidence type="ECO:0000303" key="11">
    <source>
    </source>
</evidence>
<evidence type="ECO:0000305" key="12"/>
<evidence type="ECO:0000305" key="13">
    <source>
    </source>
</evidence>
<protein>
    <recommendedName>
        <fullName evidence="12">Probable diguanylate cyclase DgcE</fullName>
        <shortName evidence="12">DGC</shortName>
        <ecNumber evidence="1">2.7.7.65</ecNumber>
    </recommendedName>
</protein>
<accession>P38097</accession>
<accession>P76391</accession>
<gene>
    <name evidence="11" type="primary">dgcE</name>
    <name type="synonym">yegE</name>
    <name type="ordered locus">b2067</name>
    <name type="ordered locus">JW2052</name>
</gene>
<name>DGCE_ECOLI</name>
<keyword id="KW-0997">Cell inner membrane</keyword>
<keyword id="KW-1003">Cell membrane</keyword>
<keyword id="KW-0342">GTP-binding</keyword>
<keyword id="KW-0460">Magnesium</keyword>
<keyword id="KW-0472">Membrane</keyword>
<keyword id="KW-0479">Metal-binding</keyword>
<keyword id="KW-0547">Nucleotide-binding</keyword>
<keyword id="KW-1185">Reference proteome</keyword>
<keyword id="KW-0677">Repeat</keyword>
<keyword id="KW-0808">Transferase</keyword>
<keyword id="KW-0812">Transmembrane</keyword>
<keyword id="KW-1133">Transmembrane helix</keyword>
<sequence>MSKQSQHVLIALPHPLLHLVSLGLVSFIFTLFSLELSQFGTQLAPLWFPTSIMMVAFYRHAGRMWPGIALSCSLGNIAASILLFSTSSLNMTWTTINIVEAVVGAVLLRKLLPWYNPLQNLADWLRLALGSAIVPPLLGGVLVVLLTPGDDPLRAFLIWVLSESIGALALVPLGLLFKPHYLLRHRNPRLLFESLLTLAITLTLSWLSMLYLPWPFTFIIVLLMWSAVRLPRMEAFLIFLTTVMMVSLMMAADPSLLATPRTYLMSHMPWLPFLLILLPANIMTMVMYAFRAERKHISESETHFRNAMEYSAIGMALVGTEGQWLQTNKALCQFLGYSQEELRGLTFQQLTWPEDLNKDLQQVEKLISGEINTYSMEKRYYNRNGDVVWALLAVSLVRHTDGTPLYFIAQIEDINELKRTEQVNQQLMERITLANEAGGIGIWEWELKPNIFSWDKRMFELYEIPPHIKPNWQVWYECVLPEDRQHAEKVIRDSLQSRSPFKLEFRITVKDGIRHIRALANRVLNKEGEVERLLGINMDMTEVKQLNEALFQEKERLHITLDSIGEAVVCIDMAMKITFMNPVAEKMSGWTQEEALGVPLLTVLHITFGDNGPLMENIYSADTSRSAIEQDVVLHCRSGGSYDVHYSITPLSTLDGSNIGSVLVIQDVTESRKMLRQLSYSASHDALTHLANRASFEKQLRILLQTVNSTHQRHALVFIDLDRFKAVNDSAGHAAGDALLRELASLMLSMLRSSDVLARLGGDEFGLLLPDCNVESARFIATRIISAVNDYHFIWEGRVHRVGASAGITLIDDNNHQAAEVMSQADIACYASKNGGRGRVTVYEPQQAAAHSERAAMSLDEQWRMIKENQLMMLAHGVASPRIPEARNLWLISLKLWSCEGEIIDEQTFRRSFSDPALSHALDRRVFHEFFQQAAKAVASKGISISLPLSVAGLSSATLVNDLLEQLENSPLPPRLLHLIIPAEAILDHAESVQKLRLAGCRIVLSQVGRDLQIFNSLKANMADYLLLDGELCANVQGNLMDEMLITIIQGHAQRLGMKTIAGPVVLPLVMDTLSGIGVDLIYGEVIADAQPLDLLVNSSYFAIN</sequence>
<proteinExistence type="evidence at transcript level"/>
<comment type="function">
    <text evidence="1 10 13">Catalyzes the synthesis of cyclic-di-GMP (c-di-GMP) via the condensation of 2 GTP molecules (By similarity). Involved in the control of the switch from cell motility to adhesion via regulation of cellular levels of c-di-GMP (Probable). Part of a signaling cascade that regulates curli biosynthesis. The cascade is composed of two c-di-GMP control modules, in which c-di-GMP controlled by the DgcE/PdeH pair (module I) regulates the activity of the DgcM/PdeR pair (module II), which in turn regulates activity of the transcription factor MlrA and expression of the master biofilm regulator csgD (PubMed:23708798).</text>
</comment>
<comment type="catalytic activity">
    <reaction evidence="1">
        <text>2 GTP = 3',3'-c-di-GMP + 2 diphosphate</text>
        <dbReference type="Rhea" id="RHEA:24898"/>
        <dbReference type="ChEBI" id="CHEBI:33019"/>
        <dbReference type="ChEBI" id="CHEBI:37565"/>
        <dbReference type="ChEBI" id="CHEBI:58805"/>
        <dbReference type="EC" id="2.7.7.65"/>
    </reaction>
</comment>
<comment type="cofactor">
    <cofactor evidence="1">
        <name>Mg(2+)</name>
        <dbReference type="ChEBI" id="CHEBI:18420"/>
    </cofactor>
    <text evidence="1">Binds 1 Mg(2+) ion per monomer.</text>
</comment>
<comment type="pathway">
    <text evidence="12">Purine metabolism; 3',5'-cyclic di-GMP biosynthesis.</text>
</comment>
<comment type="subunit">
    <text evidence="1">Homodimer.</text>
</comment>
<comment type="subcellular location">
    <subcellularLocation>
        <location evidence="12">Cell inner membrane</location>
        <topology evidence="2">Multi-pass membrane protein</topology>
    </subcellularLocation>
</comment>
<comment type="induction">
    <text evidence="8">Expressed during transition into stationary phase, expression is equal at 28 and 37 degrees Celsius. Expression is RpoS dependent.</text>
</comment>
<comment type="disruption phenotype">
    <text evidence="7 8 9">Decreased biofilm formation, decreased expression of DgcC, a probable diguanylate cyclase and of the curli regulator CsgD (PubMed:19332833). Disruption leads to decreaseded expression of adhesive curli fimbriae genes (PubMed:18765794). Also partially suppresses the reduced motility of a pdeH disruption; concomitant disruption of dosC, dgcE, dgcQ and dgcN completely restores motility, suggesting these 4 genes, together with the c-di-GMP phosphodiesterase PdeH, form a network that regulates cell motility by altering levels of c-di-GMP.</text>
</comment>